<comment type="subcellular location">
    <subcellularLocation>
        <location evidence="1">Secreted</location>
    </subcellularLocation>
</comment>
<comment type="tissue specificity">
    <text>Expressed by the venom duct.</text>
</comment>
<comment type="domain">
    <text evidence="1">The presence of a 'disulfide through disulfide knot' structurally defines this protein as a knottin.</text>
</comment>
<comment type="domain">
    <text>The cysteine framework is VI/VII (C-C-CC-C-C).</text>
</comment>
<comment type="similarity">
    <text evidence="3">Belongs to the conotoxin O1 superfamily.</text>
</comment>
<keyword id="KW-0165">Cleavage on pair of basic residues</keyword>
<keyword id="KW-1015">Disulfide bond</keyword>
<keyword id="KW-0960">Knottin</keyword>
<keyword id="KW-0964">Secreted</keyword>
<keyword id="KW-0732">Signal</keyword>
<keyword id="KW-0800">Toxin</keyword>
<proteinExistence type="evidence at transcript level"/>
<feature type="signal peptide" evidence="2">
    <location>
        <begin position="1" status="less than"/>
        <end position="17"/>
    </location>
</feature>
<feature type="propeptide" id="PRO_0000392138" evidence="1">
    <location>
        <begin position="18"/>
        <end position="40"/>
    </location>
</feature>
<feature type="peptide" id="PRO_0000392139" description="Conotoxin AbVIO">
    <location>
        <begin position="43"/>
        <end position="67"/>
    </location>
</feature>
<feature type="disulfide bond" evidence="1">
    <location>
        <begin position="43"/>
        <end position="57"/>
    </location>
</feature>
<feature type="disulfide bond" evidence="1">
    <location>
        <begin position="50"/>
        <end position="61"/>
    </location>
</feature>
<feature type="disulfide bond" evidence="1">
    <location>
        <begin position="56"/>
        <end position="66"/>
    </location>
</feature>
<feature type="non-terminal residue">
    <location>
        <position position="1"/>
    </location>
</feature>
<name>O16O_CONAB</name>
<organism>
    <name type="scientific">Conus abbreviatus</name>
    <name type="common">Abbreviated cone</name>
    <name type="synonym">Miliariconus abbreviatus</name>
    <dbReference type="NCBI Taxonomy" id="100123"/>
    <lineage>
        <taxon>Eukaryota</taxon>
        <taxon>Metazoa</taxon>
        <taxon>Spiralia</taxon>
        <taxon>Lophotrochozoa</taxon>
        <taxon>Mollusca</taxon>
        <taxon>Gastropoda</taxon>
        <taxon>Caenogastropoda</taxon>
        <taxon>Neogastropoda</taxon>
        <taxon>Conoidea</taxon>
        <taxon>Conidae</taxon>
        <taxon>Conus</taxon>
        <taxon>Virroconus</taxon>
    </lineage>
</organism>
<protein>
    <recommendedName>
        <fullName>Conotoxin AbVIO</fullName>
    </recommendedName>
</protein>
<dbReference type="EMBL" id="AF090064">
    <property type="protein sequence ID" value="AAD48317.1"/>
    <property type="molecule type" value="mRNA"/>
</dbReference>
<dbReference type="EMBL" id="AF090065">
    <property type="protein sequence ID" value="AAD48318.1"/>
    <property type="molecule type" value="mRNA"/>
</dbReference>
<dbReference type="EMBL" id="AF090066">
    <property type="protein sequence ID" value="AAD48319.1"/>
    <property type="molecule type" value="mRNA"/>
</dbReference>
<dbReference type="EMBL" id="AF090067">
    <property type="protein sequence ID" value="AAD48320.1"/>
    <property type="molecule type" value="mRNA"/>
</dbReference>
<dbReference type="EMBL" id="AF090068">
    <property type="protein sequence ID" value="AAD48321.1"/>
    <property type="molecule type" value="mRNA"/>
</dbReference>
<dbReference type="EMBL" id="AF090069">
    <property type="protein sequence ID" value="AAD48322.1"/>
    <property type="molecule type" value="mRNA"/>
</dbReference>
<dbReference type="SMR" id="Q9TVQ7"/>
<dbReference type="ConoServer" id="1039">
    <property type="toxin name" value="ABVIO precursor"/>
</dbReference>
<dbReference type="GO" id="GO:0005576">
    <property type="term" value="C:extracellular region"/>
    <property type="evidence" value="ECO:0007669"/>
    <property type="project" value="UniProtKB-SubCell"/>
</dbReference>
<dbReference type="GO" id="GO:0008200">
    <property type="term" value="F:ion channel inhibitor activity"/>
    <property type="evidence" value="ECO:0007669"/>
    <property type="project" value="InterPro"/>
</dbReference>
<dbReference type="GO" id="GO:0090729">
    <property type="term" value="F:toxin activity"/>
    <property type="evidence" value="ECO:0007669"/>
    <property type="project" value="UniProtKB-KW"/>
</dbReference>
<dbReference type="InterPro" id="IPR004214">
    <property type="entry name" value="Conotoxin"/>
</dbReference>
<dbReference type="Pfam" id="PF02950">
    <property type="entry name" value="Conotoxin"/>
    <property type="match status" value="1"/>
</dbReference>
<reference key="1">
    <citation type="journal article" date="1999" name="Proc. Natl. Acad. Sci. U.S.A.">
        <title>Molecular genetics of ecological diversification: duplication and rapid evolution of toxin genes of the venomous gastropod Conus.</title>
        <authorList>
            <person name="Duda T.F. Jr."/>
            <person name="Palumbi S.R."/>
        </authorList>
    </citation>
    <scope>NUCLEOTIDE SEQUENCE [MRNA]</scope>
    <source>
        <tissue>Venom duct</tissue>
    </source>
</reference>
<reference key="2">
    <citation type="journal article" date="2004" name="Proc. R. Soc. B">
        <title>Gene expression and feeding ecology: evolution of piscivory in the venomous gastropod genus Conus.</title>
        <authorList>
            <person name="Duda T.F. Jr."/>
            <person name="Palumbi S.R."/>
        </authorList>
    </citation>
    <scope>NUCLEOTIDE SEQUENCE [MRNA]</scope>
    <source>
        <tissue>Venom duct</tissue>
    </source>
</reference>
<accession>Q9TVQ7</accession>
<sequence>VIIIAVLFLTACQLIATASYARSERKHPDLRLSSRNSKLSKRCLGSRELCVRDTSCCSMSCTNNICF</sequence>
<evidence type="ECO:0000250" key="1"/>
<evidence type="ECO:0000255" key="2"/>
<evidence type="ECO:0000305" key="3"/>